<name>CLPS_BURP1</name>
<proteinExistence type="inferred from homology"/>
<organism>
    <name type="scientific">Burkholderia pseudomallei (strain 1710b)</name>
    <dbReference type="NCBI Taxonomy" id="320372"/>
    <lineage>
        <taxon>Bacteria</taxon>
        <taxon>Pseudomonadati</taxon>
        <taxon>Pseudomonadota</taxon>
        <taxon>Betaproteobacteria</taxon>
        <taxon>Burkholderiales</taxon>
        <taxon>Burkholderiaceae</taxon>
        <taxon>Burkholderia</taxon>
        <taxon>pseudomallei group</taxon>
    </lineage>
</organism>
<sequence>MAIIPDKQDSSVLERKEQKLKPPSMYKVVLLNDDFTPMEFVVMVVQEYFKKDRETATQIMLKVHREGRGVCGVYTRDIASTKVEQVVTHARQAGHPLQCVMEEA</sequence>
<feature type="chain" id="PRO_0000300700" description="ATP-dependent Clp protease adapter protein ClpS">
    <location>
        <begin position="1"/>
        <end position="104"/>
    </location>
</feature>
<dbReference type="EMBL" id="CP000124">
    <property type="protein sequence ID" value="ABA49789.1"/>
    <property type="molecule type" value="Genomic_DNA"/>
</dbReference>
<dbReference type="RefSeq" id="WP_004194131.1">
    <property type="nucleotide sequence ID" value="NC_007434.1"/>
</dbReference>
<dbReference type="SMR" id="Q3JV77"/>
<dbReference type="EnsemblBacteria" id="ABA49789">
    <property type="protein sequence ID" value="ABA49789"/>
    <property type="gene ID" value="BURPS1710b_1113"/>
</dbReference>
<dbReference type="GeneID" id="93059411"/>
<dbReference type="KEGG" id="bpm:BURPS1710b_1113"/>
<dbReference type="HOGENOM" id="CLU_134358_0_0_4"/>
<dbReference type="Proteomes" id="UP000002700">
    <property type="component" value="Chromosome I"/>
</dbReference>
<dbReference type="GO" id="GO:0030163">
    <property type="term" value="P:protein catabolic process"/>
    <property type="evidence" value="ECO:0007669"/>
    <property type="project" value="InterPro"/>
</dbReference>
<dbReference type="GO" id="GO:0006508">
    <property type="term" value="P:proteolysis"/>
    <property type="evidence" value="ECO:0007669"/>
    <property type="project" value="UniProtKB-UniRule"/>
</dbReference>
<dbReference type="FunFam" id="3.30.1390.10:FF:000002">
    <property type="entry name" value="ATP-dependent Clp protease adapter protein ClpS"/>
    <property type="match status" value="1"/>
</dbReference>
<dbReference type="Gene3D" id="3.30.1390.10">
    <property type="match status" value="1"/>
</dbReference>
<dbReference type="HAMAP" id="MF_00302">
    <property type="entry name" value="ClpS"/>
    <property type="match status" value="1"/>
</dbReference>
<dbReference type="InterPro" id="IPR022935">
    <property type="entry name" value="ClpS"/>
</dbReference>
<dbReference type="InterPro" id="IPR003769">
    <property type="entry name" value="ClpS_core"/>
</dbReference>
<dbReference type="InterPro" id="IPR014719">
    <property type="entry name" value="Ribosomal_bL12_C/ClpS-like"/>
</dbReference>
<dbReference type="NCBIfam" id="NF000672">
    <property type="entry name" value="PRK00033.1-5"/>
    <property type="match status" value="1"/>
</dbReference>
<dbReference type="PANTHER" id="PTHR33473:SF19">
    <property type="entry name" value="ATP-DEPENDENT CLP PROTEASE ADAPTER PROTEIN CLPS"/>
    <property type="match status" value="1"/>
</dbReference>
<dbReference type="PANTHER" id="PTHR33473">
    <property type="entry name" value="ATP-DEPENDENT CLP PROTEASE ADAPTER PROTEIN CLPS1, CHLOROPLASTIC"/>
    <property type="match status" value="1"/>
</dbReference>
<dbReference type="Pfam" id="PF02617">
    <property type="entry name" value="ClpS"/>
    <property type="match status" value="1"/>
</dbReference>
<dbReference type="SUPFAM" id="SSF54736">
    <property type="entry name" value="ClpS-like"/>
    <property type="match status" value="1"/>
</dbReference>
<gene>
    <name evidence="1" type="primary">clpS</name>
    <name type="ordered locus">BURPS1710b_1113</name>
</gene>
<reference key="1">
    <citation type="journal article" date="2010" name="Genome Biol. Evol.">
        <title>Continuing evolution of Burkholderia mallei through genome reduction and large-scale rearrangements.</title>
        <authorList>
            <person name="Losada L."/>
            <person name="Ronning C.M."/>
            <person name="DeShazer D."/>
            <person name="Woods D."/>
            <person name="Fedorova N."/>
            <person name="Kim H.S."/>
            <person name="Shabalina S.A."/>
            <person name="Pearson T.R."/>
            <person name="Brinkac L."/>
            <person name="Tan P."/>
            <person name="Nandi T."/>
            <person name="Crabtree J."/>
            <person name="Badger J."/>
            <person name="Beckstrom-Sternberg S."/>
            <person name="Saqib M."/>
            <person name="Schutzer S.E."/>
            <person name="Keim P."/>
            <person name="Nierman W.C."/>
        </authorList>
    </citation>
    <scope>NUCLEOTIDE SEQUENCE [LARGE SCALE GENOMIC DNA]</scope>
    <source>
        <strain>1710b</strain>
    </source>
</reference>
<accession>Q3JV77</accession>
<comment type="function">
    <text evidence="1">Involved in the modulation of the specificity of the ClpAP-mediated ATP-dependent protein degradation.</text>
</comment>
<comment type="subunit">
    <text evidence="1">Binds to the N-terminal domain of the chaperone ClpA.</text>
</comment>
<comment type="similarity">
    <text evidence="1">Belongs to the ClpS family.</text>
</comment>
<protein>
    <recommendedName>
        <fullName evidence="1">ATP-dependent Clp protease adapter protein ClpS</fullName>
    </recommendedName>
</protein>
<evidence type="ECO:0000255" key="1">
    <source>
        <dbReference type="HAMAP-Rule" id="MF_00302"/>
    </source>
</evidence>